<proteinExistence type="inferred from homology"/>
<dbReference type="EC" id="5.6.2.2" evidence="2"/>
<dbReference type="EMBL" id="AB008685">
    <property type="protein sequence ID" value="BAA75402.1"/>
    <property type="molecule type" value="Genomic_DNA"/>
</dbReference>
<dbReference type="EMBL" id="D73427">
    <property type="protein sequence ID" value="BAA11152.1"/>
    <property type="molecule type" value="Genomic_DNA"/>
</dbReference>
<dbReference type="EMBL" id="D73412">
    <property type="protein sequence ID" value="BAA11137.1"/>
    <property type="molecule type" value="Genomic_DNA"/>
</dbReference>
<dbReference type="PIR" id="T43898">
    <property type="entry name" value="T43898"/>
</dbReference>
<dbReference type="SMR" id="Q43947"/>
<dbReference type="STRING" id="471.BUM88_19590"/>
<dbReference type="GO" id="GO:0005737">
    <property type="term" value="C:cytoplasm"/>
    <property type="evidence" value="ECO:0007669"/>
    <property type="project" value="UniProtKB-SubCell"/>
</dbReference>
<dbReference type="GO" id="GO:0005524">
    <property type="term" value="F:ATP binding"/>
    <property type="evidence" value="ECO:0007669"/>
    <property type="project" value="UniProtKB-KW"/>
</dbReference>
<dbReference type="GO" id="GO:0003677">
    <property type="term" value="F:DNA binding"/>
    <property type="evidence" value="ECO:0007669"/>
    <property type="project" value="UniProtKB-KW"/>
</dbReference>
<dbReference type="GO" id="GO:0003918">
    <property type="term" value="F:DNA topoisomerase type II (double strand cut, ATP-hydrolyzing) activity"/>
    <property type="evidence" value="ECO:0007669"/>
    <property type="project" value="UniProtKB-EC"/>
</dbReference>
<dbReference type="GO" id="GO:0006265">
    <property type="term" value="P:DNA topological change"/>
    <property type="evidence" value="ECO:0007669"/>
    <property type="project" value="InterPro"/>
</dbReference>
<dbReference type="CDD" id="cd00822">
    <property type="entry name" value="TopoII_Trans_DNA_gyrase"/>
    <property type="match status" value="1"/>
</dbReference>
<dbReference type="FunFam" id="3.30.230.10:FF:000005">
    <property type="entry name" value="DNA gyrase subunit B"/>
    <property type="match status" value="1"/>
</dbReference>
<dbReference type="Gene3D" id="3.30.230.10">
    <property type="match status" value="1"/>
</dbReference>
<dbReference type="Gene3D" id="3.40.50.670">
    <property type="match status" value="1"/>
</dbReference>
<dbReference type="Gene3D" id="3.30.565.10">
    <property type="entry name" value="Histidine kinase-like ATPase, C-terminal domain"/>
    <property type="match status" value="1"/>
</dbReference>
<dbReference type="InterPro" id="IPR036890">
    <property type="entry name" value="HATPase_C_sf"/>
</dbReference>
<dbReference type="InterPro" id="IPR020568">
    <property type="entry name" value="Ribosomal_Su5_D2-typ_SF"/>
</dbReference>
<dbReference type="InterPro" id="IPR014721">
    <property type="entry name" value="Ribsml_uS5_D2-typ_fold_subgr"/>
</dbReference>
<dbReference type="InterPro" id="IPR001241">
    <property type="entry name" value="Topo_IIA"/>
</dbReference>
<dbReference type="InterPro" id="IPR013760">
    <property type="entry name" value="Topo_IIA-like_dom_sf"/>
</dbReference>
<dbReference type="InterPro" id="IPR000565">
    <property type="entry name" value="Topo_IIA_B"/>
</dbReference>
<dbReference type="InterPro" id="IPR013759">
    <property type="entry name" value="Topo_IIA_B_C"/>
</dbReference>
<dbReference type="InterPro" id="IPR013506">
    <property type="entry name" value="Topo_IIA_bsu_dom2"/>
</dbReference>
<dbReference type="InterPro" id="IPR018522">
    <property type="entry name" value="TopoIIA_CS"/>
</dbReference>
<dbReference type="InterPro" id="IPR006171">
    <property type="entry name" value="TOPRIM_dom"/>
</dbReference>
<dbReference type="PANTHER" id="PTHR45866:SF1">
    <property type="entry name" value="DNA GYRASE SUBUNIT B, MITOCHONDRIAL"/>
    <property type="match status" value="1"/>
</dbReference>
<dbReference type="PANTHER" id="PTHR45866">
    <property type="entry name" value="DNA GYRASE/TOPOISOMERASE SUBUNIT B"/>
    <property type="match status" value="1"/>
</dbReference>
<dbReference type="Pfam" id="PF00204">
    <property type="entry name" value="DNA_gyraseB"/>
    <property type="match status" value="1"/>
</dbReference>
<dbReference type="Pfam" id="PF01751">
    <property type="entry name" value="Toprim"/>
    <property type="match status" value="1"/>
</dbReference>
<dbReference type="PRINTS" id="PR01159">
    <property type="entry name" value="DNAGYRASEB"/>
</dbReference>
<dbReference type="PRINTS" id="PR00418">
    <property type="entry name" value="TPI2FAMILY"/>
</dbReference>
<dbReference type="SMART" id="SM00433">
    <property type="entry name" value="TOP2c"/>
    <property type="match status" value="1"/>
</dbReference>
<dbReference type="SUPFAM" id="SSF55874">
    <property type="entry name" value="ATPase domain of HSP90 chaperone/DNA topoisomerase II/histidine kinase"/>
    <property type="match status" value="1"/>
</dbReference>
<dbReference type="SUPFAM" id="SSF54211">
    <property type="entry name" value="Ribosomal protein S5 domain 2-like"/>
    <property type="match status" value="1"/>
</dbReference>
<dbReference type="SUPFAM" id="SSF56719">
    <property type="entry name" value="Type II DNA topoisomerase"/>
    <property type="match status" value="1"/>
</dbReference>
<dbReference type="PROSITE" id="PS00177">
    <property type="entry name" value="TOPOISOMERASE_II"/>
    <property type="match status" value="1"/>
</dbReference>
<dbReference type="PROSITE" id="PS50880">
    <property type="entry name" value="TOPRIM"/>
    <property type="match status" value="1"/>
</dbReference>
<comment type="function">
    <text evidence="1">A type II topoisomerase that negatively supercoils closed circular double-stranded (ds) DNA in an ATP-dependent manner to modulate DNA topology and maintain chromosomes in an underwound state. Negative supercoiling favors strand separation, and DNA replication, transcription, recombination and repair, all of which involve strand separation. Also able to catalyze the interconversion of other topological isomers of dsDNA rings, including catenanes and knotted rings. Type II topoisomerases break and join 2 DNA strands simultaneously in an ATP-dependent manner.</text>
</comment>
<comment type="catalytic activity">
    <reaction evidence="2">
        <text>ATP-dependent breakage, passage and rejoining of double-stranded DNA.</text>
        <dbReference type="EC" id="5.6.2.2"/>
    </reaction>
</comment>
<comment type="subunit">
    <text evidence="1">Heterotetramer, composed of two GyrA and two GyrB chains. In the heterotetramer, GyrA contains the active site tyrosine that forms a transient covalent intermediate with DNA, while GyrB binds cofactors and catalyzes ATP hydrolysis.</text>
</comment>
<comment type="subcellular location">
    <subcellularLocation>
        <location evidence="1">Cytoplasm</location>
    </subcellularLocation>
</comment>
<comment type="miscellaneous">
    <text evidence="1">Few gyrases are as efficient as E.coli at forming negative supercoils. Not all organisms have 2 type II topoisomerases; in organisms with a single type II topoisomerase this enzyme also has to decatenate newly replicated chromosomes.</text>
</comment>
<comment type="similarity">
    <text evidence="3">Belongs to the type II topoisomerase GyrB family.</text>
</comment>
<evidence type="ECO:0000250" key="1">
    <source>
        <dbReference type="UniProtKB" id="P0AES6"/>
    </source>
</evidence>
<evidence type="ECO:0000255" key="2">
    <source>
        <dbReference type="PROSITE-ProRule" id="PRU00995"/>
    </source>
</evidence>
<evidence type="ECO:0000305" key="3"/>
<reference key="1">
    <citation type="journal article" date="1999" name="Int. J. Syst. Bacteriol.">
        <title>Phylogenetic structures of the genus Acinetobacter based on gyrB sequences: comparison with the grouping by DNA-DNA hybridization.</title>
        <authorList>
            <person name="Yamamoto S."/>
            <person name="Bouvet P.J.M."/>
            <person name="Harayama S."/>
        </authorList>
    </citation>
    <scope>NUCLEOTIDE SEQUENCE [GENOMIC DNA]</scope>
    <source>
        <strain>ATCC 23055 / DSM 30006 / JCM 6842 / CCUG 12804 / CIP 81.08 / LMD 22.16 / NBRC 13718 / NCTC 12983 / Delft L360</strain>
    </source>
</reference>
<reference key="2">
    <citation type="journal article" date="1996" name="Int. J. Syst. Bacteriol.">
        <title>Phylogenetic analysis of Acinetobacter strains based on the nucleotide sequences of gyrB genes and on the amino acid sequences of their products.</title>
        <authorList>
            <person name="Yamamoto S."/>
            <person name="Harayama S."/>
        </authorList>
    </citation>
    <scope>NUCLEOTIDE SEQUENCE [GENOMIC DNA] OF 3-118 AND 289-388</scope>
    <source>
        <strain>ATCC 23055 / DSM 30006 / JCM 6842 / CCUG 12804 / CIP 81.08 / LMD 22.16 / NBRC 13718 / NCTC 12983 / Delft L360</strain>
    </source>
</reference>
<accession>Q43947</accession>
<accession>Q59089</accession>
<accession>Q9ZA09</accession>
<gene>
    <name type="primary">gyrB</name>
</gene>
<feature type="chain" id="PRO_0000145275" description="DNA gyrase subunit B">
    <location>
        <begin position="1" status="less than"/>
        <end position="388" status="greater than"/>
    </location>
</feature>
<feature type="domain" description="Toprim" evidence="2">
    <location>
        <begin position="312"/>
        <end position="388" status="greater than"/>
    </location>
</feature>
<feature type="site" description="Interaction with DNA" evidence="2">
    <location>
        <position position="343"/>
    </location>
</feature>
<feature type="site" description="Interaction with DNA" evidence="2">
    <location>
        <position position="346"/>
    </location>
</feature>
<feature type="sequence conflict" description="In Ref. 2; BAA11152." evidence="3" ref="2">
    <original>GVS</original>
    <variation>RVG</variation>
    <location>
        <begin position="12"/>
        <end position="14"/>
    </location>
</feature>
<feature type="sequence conflict" description="In Ref. 2; BAA11152." evidence="3" ref="2">
    <original>E</original>
    <variation>G</variation>
    <location>
        <position position="107"/>
    </location>
</feature>
<feature type="sequence conflict" description="In Ref. 2; BAA11152." evidence="3" ref="2">
    <original>Y</original>
    <variation>F</variation>
    <location>
        <position position="110"/>
    </location>
</feature>
<feature type="non-terminal residue">
    <location>
        <position position="1"/>
    </location>
</feature>
<feature type="non-terminal residue">
    <location>
        <position position="388"/>
    </location>
</feature>
<keyword id="KW-0067">ATP-binding</keyword>
<keyword id="KW-0963">Cytoplasm</keyword>
<keyword id="KW-0238">DNA-binding</keyword>
<keyword id="KW-0413">Isomerase</keyword>
<keyword id="KW-0547">Nucleotide-binding</keyword>
<keyword id="KW-0799">Topoisomerase</keyword>
<protein>
    <recommendedName>
        <fullName>DNA gyrase subunit B</fullName>
        <ecNumber evidence="2">5.6.2.2</ecNumber>
    </recommendedName>
</protein>
<sequence>DNSYKVSGGLHGVSVSVVNALSSKLHLMISRAGQVHEQEYQHGDPQYPLRVIGETDKSGTTVRFWPSELTFTQTIFNVEILARRLRELSFLNAGVRIVLRDERINLEHVYDYEGGLSEFVKYINEGKTHLNEIFHFTADTDSGIGVEVALQWNESYQENVRCFTNNIPQKDGGSHLAGFRAALTRGLNQYLENENILKKEKVNVTGDDAREGLTAIISVKVPDPKFSSQTKEKLVSSEVKPAVEQAMNKEFSAYLLENPQAAKSIAGKIIDAARARDAARKAREMTRRKSALDIAGLPGKLADCQEKDPALSELYLVEGDSAGGSAKQGRNRKMQAILPLKGKILNVERARFDKMISSQEVGTLITALGCGIGREEYNPDKLRYHKII</sequence>
<organism>
    <name type="scientific">Acinetobacter calcoaceticus</name>
    <dbReference type="NCBI Taxonomy" id="471"/>
    <lineage>
        <taxon>Bacteria</taxon>
        <taxon>Pseudomonadati</taxon>
        <taxon>Pseudomonadota</taxon>
        <taxon>Gammaproteobacteria</taxon>
        <taxon>Moraxellales</taxon>
        <taxon>Moraxellaceae</taxon>
        <taxon>Acinetobacter</taxon>
        <taxon>Acinetobacter calcoaceticus/baumannii complex</taxon>
    </lineage>
</organism>
<name>GYRB_ACICA</name>